<proteinExistence type="inferred from homology"/>
<evidence type="ECO:0000255" key="1">
    <source>
        <dbReference type="HAMAP-Rule" id="MF_00134"/>
    </source>
</evidence>
<sequence>MSQEFLARILEQKAREVEQMKLEQIQPLRQTYRLAEFLKNHQDCLQVIAEVKKASPSLGDINLDVDIVQQAQTYEENGAVMISVLTDEVFFKGHLDYLREISSQVEIPTLNKDFIIDEKQIIRARNAGATVILLIVAALSEERLKELYDYATELGLEVLVETHNLAELEVAHRLGAEIIGVNNRNLTTFEVDLQTSVDLAPYFEEGRYYISESAIFTGQDAERLAPYFNGILVGTALMQAENVVQRIKELQIDKG</sequence>
<keyword id="KW-0028">Amino-acid biosynthesis</keyword>
<keyword id="KW-0057">Aromatic amino acid biosynthesis</keyword>
<keyword id="KW-0210">Decarboxylase</keyword>
<keyword id="KW-0456">Lyase</keyword>
<keyword id="KW-0822">Tryptophan biosynthesis</keyword>
<organism>
    <name type="scientific">Streptococcus pneumoniae (strain JJA)</name>
    <dbReference type="NCBI Taxonomy" id="488222"/>
    <lineage>
        <taxon>Bacteria</taxon>
        <taxon>Bacillati</taxon>
        <taxon>Bacillota</taxon>
        <taxon>Bacilli</taxon>
        <taxon>Lactobacillales</taxon>
        <taxon>Streptococcaceae</taxon>
        <taxon>Streptococcus</taxon>
    </lineage>
</organism>
<feature type="chain" id="PRO_1000198789" description="Indole-3-glycerol phosphate synthase">
    <location>
        <begin position="1"/>
        <end position="255"/>
    </location>
</feature>
<dbReference type="EC" id="4.1.1.48" evidence="1"/>
<dbReference type="EMBL" id="CP000919">
    <property type="protein sequence ID" value="ACO18517.1"/>
    <property type="molecule type" value="Genomic_DNA"/>
</dbReference>
<dbReference type="RefSeq" id="WP_000076536.1">
    <property type="nucleotide sequence ID" value="NC_012466.1"/>
</dbReference>
<dbReference type="SMR" id="C1CG44"/>
<dbReference type="KEGG" id="sjj:SPJ_1722"/>
<dbReference type="HOGENOM" id="CLU_034247_2_1_9"/>
<dbReference type="UniPathway" id="UPA00035">
    <property type="reaction ID" value="UER00043"/>
</dbReference>
<dbReference type="Proteomes" id="UP000002206">
    <property type="component" value="Chromosome"/>
</dbReference>
<dbReference type="GO" id="GO:0004425">
    <property type="term" value="F:indole-3-glycerol-phosphate synthase activity"/>
    <property type="evidence" value="ECO:0007669"/>
    <property type="project" value="UniProtKB-UniRule"/>
</dbReference>
<dbReference type="GO" id="GO:0004640">
    <property type="term" value="F:phosphoribosylanthranilate isomerase activity"/>
    <property type="evidence" value="ECO:0007669"/>
    <property type="project" value="TreeGrafter"/>
</dbReference>
<dbReference type="GO" id="GO:0000162">
    <property type="term" value="P:L-tryptophan biosynthetic process"/>
    <property type="evidence" value="ECO:0007669"/>
    <property type="project" value="UniProtKB-UniRule"/>
</dbReference>
<dbReference type="CDD" id="cd00331">
    <property type="entry name" value="IGPS"/>
    <property type="match status" value="1"/>
</dbReference>
<dbReference type="FunFam" id="3.20.20.70:FF:000024">
    <property type="entry name" value="Indole-3-glycerol phosphate synthase"/>
    <property type="match status" value="1"/>
</dbReference>
<dbReference type="Gene3D" id="3.20.20.70">
    <property type="entry name" value="Aldolase class I"/>
    <property type="match status" value="1"/>
</dbReference>
<dbReference type="HAMAP" id="MF_00134_B">
    <property type="entry name" value="IGPS_B"/>
    <property type="match status" value="1"/>
</dbReference>
<dbReference type="InterPro" id="IPR013785">
    <property type="entry name" value="Aldolase_TIM"/>
</dbReference>
<dbReference type="InterPro" id="IPR045186">
    <property type="entry name" value="Indole-3-glycerol_P_synth"/>
</dbReference>
<dbReference type="InterPro" id="IPR013798">
    <property type="entry name" value="Indole-3-glycerol_P_synth_dom"/>
</dbReference>
<dbReference type="InterPro" id="IPR001468">
    <property type="entry name" value="Indole-3-GlycerolPSynthase_CS"/>
</dbReference>
<dbReference type="InterPro" id="IPR011060">
    <property type="entry name" value="RibuloseP-bd_barrel"/>
</dbReference>
<dbReference type="NCBIfam" id="NF001371">
    <property type="entry name" value="PRK00278.1-3"/>
    <property type="match status" value="1"/>
</dbReference>
<dbReference type="NCBIfam" id="NF001377">
    <property type="entry name" value="PRK00278.2-4"/>
    <property type="match status" value="1"/>
</dbReference>
<dbReference type="PANTHER" id="PTHR22854:SF2">
    <property type="entry name" value="INDOLE-3-GLYCEROL-PHOSPHATE SYNTHASE"/>
    <property type="match status" value="1"/>
</dbReference>
<dbReference type="PANTHER" id="PTHR22854">
    <property type="entry name" value="TRYPTOPHAN BIOSYNTHESIS PROTEIN"/>
    <property type="match status" value="1"/>
</dbReference>
<dbReference type="Pfam" id="PF00218">
    <property type="entry name" value="IGPS"/>
    <property type="match status" value="1"/>
</dbReference>
<dbReference type="SUPFAM" id="SSF51366">
    <property type="entry name" value="Ribulose-phoshate binding barrel"/>
    <property type="match status" value="1"/>
</dbReference>
<dbReference type="PROSITE" id="PS00614">
    <property type="entry name" value="IGPS"/>
    <property type="match status" value="1"/>
</dbReference>
<gene>
    <name evidence="1" type="primary">trpC</name>
    <name type="ordered locus">SPJ_1722</name>
</gene>
<comment type="catalytic activity">
    <reaction evidence="1">
        <text>1-(2-carboxyphenylamino)-1-deoxy-D-ribulose 5-phosphate + H(+) = (1S,2R)-1-C-(indol-3-yl)glycerol 3-phosphate + CO2 + H2O</text>
        <dbReference type="Rhea" id="RHEA:23476"/>
        <dbReference type="ChEBI" id="CHEBI:15377"/>
        <dbReference type="ChEBI" id="CHEBI:15378"/>
        <dbReference type="ChEBI" id="CHEBI:16526"/>
        <dbReference type="ChEBI" id="CHEBI:58613"/>
        <dbReference type="ChEBI" id="CHEBI:58866"/>
        <dbReference type="EC" id="4.1.1.48"/>
    </reaction>
</comment>
<comment type="pathway">
    <text evidence="1">Amino-acid biosynthesis; L-tryptophan biosynthesis; L-tryptophan from chorismate: step 4/5.</text>
</comment>
<comment type="similarity">
    <text evidence="1">Belongs to the TrpC family.</text>
</comment>
<reference key="1">
    <citation type="journal article" date="2010" name="Genome Biol.">
        <title>Structure and dynamics of the pan-genome of Streptococcus pneumoniae and closely related species.</title>
        <authorList>
            <person name="Donati C."/>
            <person name="Hiller N.L."/>
            <person name="Tettelin H."/>
            <person name="Muzzi A."/>
            <person name="Croucher N.J."/>
            <person name="Angiuoli S.V."/>
            <person name="Oggioni M."/>
            <person name="Dunning Hotopp J.C."/>
            <person name="Hu F.Z."/>
            <person name="Riley D.R."/>
            <person name="Covacci A."/>
            <person name="Mitchell T.J."/>
            <person name="Bentley S.D."/>
            <person name="Kilian M."/>
            <person name="Ehrlich G.D."/>
            <person name="Rappuoli R."/>
            <person name="Moxon E.R."/>
            <person name="Masignani V."/>
        </authorList>
    </citation>
    <scope>NUCLEOTIDE SEQUENCE [LARGE SCALE GENOMIC DNA]</scope>
    <source>
        <strain>JJA</strain>
    </source>
</reference>
<name>TRPC_STRZJ</name>
<accession>C1CG44</accession>
<protein>
    <recommendedName>
        <fullName evidence="1">Indole-3-glycerol phosphate synthase</fullName>
        <shortName evidence="1">IGPS</shortName>
        <ecNumber evidence="1">4.1.1.48</ecNumber>
    </recommendedName>
</protein>